<organism>
    <name type="scientific">Caenorhabditis elegans</name>
    <dbReference type="NCBI Taxonomy" id="6239"/>
    <lineage>
        <taxon>Eukaryota</taxon>
        <taxon>Metazoa</taxon>
        <taxon>Ecdysozoa</taxon>
        <taxon>Nematoda</taxon>
        <taxon>Chromadorea</taxon>
        <taxon>Rhabditida</taxon>
        <taxon>Rhabditina</taxon>
        <taxon>Rhabditomorpha</taxon>
        <taxon>Rhabditoidea</taxon>
        <taxon>Rhabditidae</taxon>
        <taxon>Peloderinae</taxon>
        <taxon>Caenorhabditis</taxon>
    </lineage>
</organism>
<protein>
    <recommendedName>
        <fullName>UPF0376 protein F10G2.1</fullName>
    </recommendedName>
</protein>
<feature type="chain" id="PRO_0000248557" description="UPF0376 protein F10G2.1">
    <location>
        <begin position="1"/>
        <end position="201"/>
    </location>
</feature>
<feature type="topological domain" description="Cytoplasmic" evidence="1">
    <location>
        <begin position="1"/>
        <end position="3"/>
    </location>
</feature>
<feature type="transmembrane region" description="Helical; Signal-anchor for type II membrane protein" evidence="1">
    <location>
        <begin position="4"/>
        <end position="24"/>
    </location>
</feature>
<feature type="topological domain" description="Extracellular" evidence="1">
    <location>
        <begin position="25"/>
        <end position="201"/>
    </location>
</feature>
<feature type="glycosylation site" description="N-linked (GlcNAc...) asparagine" evidence="2 3">
    <location>
        <position position="32"/>
    </location>
</feature>
<feature type="glycosylation site" description="N-linked (GlcNAc...) asparagine" evidence="1">
    <location>
        <position position="124"/>
    </location>
</feature>
<name>U376C_CAEEL</name>
<evidence type="ECO:0000255" key="1"/>
<evidence type="ECO:0000269" key="2">
    <source>
    </source>
</evidence>
<evidence type="ECO:0000269" key="3">
    <source>
    </source>
</evidence>
<evidence type="ECO:0000305" key="4"/>
<accession>Q22957</accession>
<reference key="1">
    <citation type="journal article" date="1998" name="Science">
        <title>Genome sequence of the nematode C. elegans: a platform for investigating biology.</title>
        <authorList>
            <consortium name="The C. elegans sequencing consortium"/>
        </authorList>
    </citation>
    <scope>NUCLEOTIDE SEQUENCE [LARGE SCALE GENOMIC DNA]</scope>
    <source>
        <strain>Bristol N2</strain>
    </source>
</reference>
<reference key="2">
    <citation type="journal article" date="2003" name="Nat. Biotechnol.">
        <title>Lectin affinity capture, isotope-coded tagging and mass spectrometry to identify N-linked glycoproteins.</title>
        <authorList>
            <person name="Kaji H."/>
            <person name="Saito H."/>
            <person name="Yamauchi Y."/>
            <person name="Shinkawa T."/>
            <person name="Taoka M."/>
            <person name="Hirabayashi J."/>
            <person name="Kasai K."/>
            <person name="Takahashi N."/>
            <person name="Isobe T."/>
        </authorList>
    </citation>
    <scope>GLYCOSYLATION [LARGE SCALE ANALYSIS] AT ASN-32</scope>
    <scope>IDENTIFICATION BY MASS SPECTROMETRY</scope>
    <source>
        <strain>Bristol N2</strain>
    </source>
</reference>
<reference key="3">
    <citation type="journal article" date="2007" name="Mol. Cell. Proteomics">
        <title>Proteomics reveals N-linked glycoprotein diversity in Caenorhabditis elegans and suggests an atypical translocation mechanism for integral membrane proteins.</title>
        <authorList>
            <person name="Kaji H."/>
            <person name="Kamiie J."/>
            <person name="Kawakami H."/>
            <person name="Kido K."/>
            <person name="Yamauchi Y."/>
            <person name="Shinkawa T."/>
            <person name="Taoka M."/>
            <person name="Takahashi N."/>
            <person name="Isobe T."/>
        </authorList>
    </citation>
    <scope>GLYCOSYLATION [LARGE SCALE ANALYSIS] AT ASN-32</scope>
    <scope>IDENTIFICATION BY MASS SPECTROMETRY</scope>
    <source>
        <strain>Bristol N2</strain>
    </source>
</reference>
<keyword id="KW-0325">Glycoprotein</keyword>
<keyword id="KW-0472">Membrane</keyword>
<keyword id="KW-1185">Reference proteome</keyword>
<keyword id="KW-0735">Signal-anchor</keyword>
<keyword id="KW-0812">Transmembrane</keyword>
<keyword id="KW-1133">Transmembrane helix</keyword>
<gene>
    <name type="ORF">F10G2.1</name>
</gene>
<proteinExistence type="evidence at protein level"/>
<comment type="subcellular location">
    <subcellularLocation>
        <location evidence="4">Membrane</location>
        <topology evidence="4">Single-pass type II membrane protein</topology>
    </subcellularLocation>
</comment>
<comment type="similarity">
    <text evidence="4">Belongs to the UPF0376 family.</text>
</comment>
<dbReference type="EMBL" id="FO080316">
    <property type="protein sequence ID" value="CCD62809.1"/>
    <property type="molecule type" value="Genomic_DNA"/>
</dbReference>
<dbReference type="RefSeq" id="NP_504867.1">
    <property type="nucleotide sequence ID" value="NM_072466.6"/>
</dbReference>
<dbReference type="BioGRID" id="44167">
    <property type="interactions" value="1"/>
</dbReference>
<dbReference type="FunCoup" id="Q22957">
    <property type="interactions" value="301"/>
</dbReference>
<dbReference type="STRING" id="6239.F10G2.1.1"/>
<dbReference type="iPTMnet" id="Q22957"/>
<dbReference type="PaxDb" id="6239-F10G2.1"/>
<dbReference type="PeptideAtlas" id="Q22957"/>
<dbReference type="EnsemblMetazoa" id="F10G2.1.1">
    <property type="protein sequence ID" value="F10G2.1.1"/>
    <property type="gene ID" value="WBGene00017362"/>
</dbReference>
<dbReference type="EnsemblMetazoa" id="F10G2.1.2">
    <property type="protein sequence ID" value="F10G2.1.2"/>
    <property type="gene ID" value="WBGene00017362"/>
</dbReference>
<dbReference type="GeneID" id="179122"/>
<dbReference type="KEGG" id="cel:CELE_F10G2.1"/>
<dbReference type="UCSC" id="F10G2.1">
    <property type="organism name" value="c. elegans"/>
</dbReference>
<dbReference type="AGR" id="WB:WBGene00017362"/>
<dbReference type="CTD" id="179122"/>
<dbReference type="WormBase" id="F10G2.1">
    <property type="protein sequence ID" value="CE27945"/>
    <property type="gene ID" value="WBGene00017362"/>
</dbReference>
<dbReference type="eggNOG" id="ENOG502THJ5">
    <property type="taxonomic scope" value="Eukaryota"/>
</dbReference>
<dbReference type="GeneTree" id="ENSGT00970000195826"/>
<dbReference type="HOGENOM" id="CLU_078890_1_0_1"/>
<dbReference type="InParanoid" id="Q22957"/>
<dbReference type="OMA" id="WDPFPDA"/>
<dbReference type="OrthoDB" id="5804752at2759"/>
<dbReference type="PhylomeDB" id="Q22957"/>
<dbReference type="PRO" id="PR:Q22957"/>
<dbReference type="Proteomes" id="UP000001940">
    <property type="component" value="Chromosome V"/>
</dbReference>
<dbReference type="Bgee" id="WBGene00017362">
    <property type="expression patterns" value="Expressed in adult organism and 3 other cell types or tissues"/>
</dbReference>
<dbReference type="GO" id="GO:0016020">
    <property type="term" value="C:membrane"/>
    <property type="evidence" value="ECO:0007669"/>
    <property type="project" value="UniProtKB-SubCell"/>
</dbReference>
<dbReference type="InterPro" id="IPR002542">
    <property type="entry name" value="T20D4.11-like_dom"/>
</dbReference>
<dbReference type="InterPro" id="IPR016638">
    <property type="entry name" value="UPF0376"/>
</dbReference>
<dbReference type="PANTHER" id="PTHR21453:SF28">
    <property type="entry name" value="DUF19 DOMAIN-CONTAINING PROTEIN-RELATED"/>
    <property type="match status" value="1"/>
</dbReference>
<dbReference type="PANTHER" id="PTHR21453">
    <property type="entry name" value="DUF19 DOMAIN-CONTAINING PROTEIN-RELATED-RELATED"/>
    <property type="match status" value="1"/>
</dbReference>
<dbReference type="Pfam" id="PF01579">
    <property type="entry name" value="DUF19"/>
    <property type="match status" value="1"/>
</dbReference>
<dbReference type="PIRSF" id="PIRSF015697">
    <property type="entry name" value="UCP015697"/>
    <property type="match status" value="1"/>
</dbReference>
<sequence>MKHFLLLAIIGILFLGSTYGASVATEKLKASNCTKTEGFQAIACVLRMADFAQKIEKLDMDDKNQVNEFEKSCVSFANCFETLQCGPEDPAEKKINNMIKNYCDAVVYVAKDFADCSEKLENKNSTCYQNWDPFPDAIDEETDEKKKEKMLQEACKNYFGKDNCLKKEITEKCSETEWKGFRDHFIGISNILLECDFRNIQ</sequence>